<organism>
    <name type="scientific">Theobroma cacao</name>
    <name type="common">Cacao</name>
    <name type="synonym">Cocoa</name>
    <dbReference type="NCBI Taxonomy" id="3641"/>
    <lineage>
        <taxon>Eukaryota</taxon>
        <taxon>Viridiplantae</taxon>
        <taxon>Streptophyta</taxon>
        <taxon>Embryophyta</taxon>
        <taxon>Tracheophyta</taxon>
        <taxon>Spermatophyta</taxon>
        <taxon>Magnoliopsida</taxon>
        <taxon>eudicotyledons</taxon>
        <taxon>Gunneridae</taxon>
        <taxon>Pentapetalae</taxon>
        <taxon>rosids</taxon>
        <taxon>malvids</taxon>
        <taxon>Malvales</taxon>
        <taxon>Malvaceae</taxon>
        <taxon>Byttnerioideae</taxon>
        <taxon>Theobroma</taxon>
    </lineage>
</organism>
<feature type="chain" id="PRO_0000149955" description="Arginine decarboxylase">
    <location>
        <begin position="1" status="less than"/>
        <end position="406" status="greater than"/>
    </location>
</feature>
<feature type="binding site" evidence="1">
    <location>
        <begin position="192"/>
        <end position="202"/>
    </location>
    <ligand>
        <name>substrate</name>
    </ligand>
</feature>
<feature type="modified residue" description="N6-(pyridoxal phosphate)lysine" evidence="1">
    <location>
        <position position="8"/>
    </location>
</feature>
<feature type="non-terminal residue">
    <location>
        <position position="1"/>
    </location>
</feature>
<feature type="non-terminal residue">
    <location>
        <position position="406"/>
    </location>
</feature>
<gene>
    <name type="primary">SPE2</name>
</gene>
<reference key="1">
    <citation type="journal article" date="1998" name="Mol. Biol. Evol.">
        <title>Phylogenetic utility of the nuclear gene arginine decarboxylase: an example from Brassicaceae.</title>
        <authorList>
            <person name="Galloway G.L."/>
            <person name="Malmberg R.L."/>
            <person name="Price R.A."/>
        </authorList>
    </citation>
    <scope>NUCLEOTIDE SEQUENCE [GENOMIC DNA]</scope>
    <source>
        <strain>ADC</strain>
    </source>
</reference>
<accession>O81160</accession>
<evidence type="ECO:0000250" key="1"/>
<evidence type="ECO:0000305" key="2"/>
<proteinExistence type="inferred from homology"/>
<protein>
    <recommendedName>
        <fullName>Arginine decarboxylase</fullName>
        <shortName>ADC</shortName>
        <shortName>ARGDC</shortName>
        <ecNumber>4.1.1.19</ecNumber>
    </recommendedName>
</protein>
<dbReference type="EC" id="4.1.1.19"/>
<dbReference type="EMBL" id="AF045666">
    <property type="protein sequence ID" value="AAC68511.1"/>
    <property type="molecule type" value="Genomic_DNA"/>
</dbReference>
<dbReference type="SMR" id="O81160"/>
<dbReference type="UniPathway" id="UPA00186">
    <property type="reaction ID" value="UER00284"/>
</dbReference>
<dbReference type="Proteomes" id="UP000694886">
    <property type="component" value="Unplaced"/>
</dbReference>
<dbReference type="GO" id="GO:0008792">
    <property type="term" value="F:arginine decarboxylase activity"/>
    <property type="evidence" value="ECO:0007669"/>
    <property type="project" value="UniProtKB-EC"/>
</dbReference>
<dbReference type="GO" id="GO:0006527">
    <property type="term" value="P:arginine catabolic process"/>
    <property type="evidence" value="ECO:0007669"/>
    <property type="project" value="InterPro"/>
</dbReference>
<dbReference type="GO" id="GO:0009446">
    <property type="term" value="P:putrescine biosynthetic process"/>
    <property type="evidence" value="ECO:0007669"/>
    <property type="project" value="UniProtKB-KW"/>
</dbReference>
<dbReference type="GO" id="GO:0008295">
    <property type="term" value="P:spermidine biosynthetic process"/>
    <property type="evidence" value="ECO:0007669"/>
    <property type="project" value="UniProtKB-KW"/>
</dbReference>
<dbReference type="CDD" id="cd06830">
    <property type="entry name" value="PLPDE_III_ADC"/>
    <property type="match status" value="1"/>
</dbReference>
<dbReference type="Gene3D" id="3.20.20.10">
    <property type="entry name" value="Alanine racemase"/>
    <property type="match status" value="1"/>
</dbReference>
<dbReference type="Gene3D" id="2.40.37.10">
    <property type="entry name" value="Lyase, Ornithine Decarboxylase, Chain A, domain 1"/>
    <property type="match status" value="1"/>
</dbReference>
<dbReference type="InterPro" id="IPR009006">
    <property type="entry name" value="Ala_racemase/Decarboxylase_C"/>
</dbReference>
<dbReference type="InterPro" id="IPR002985">
    <property type="entry name" value="Arg_decrbxlase"/>
</dbReference>
<dbReference type="InterPro" id="IPR022644">
    <property type="entry name" value="De-COase2_N"/>
</dbReference>
<dbReference type="InterPro" id="IPR022653">
    <property type="entry name" value="De-COase2_pyr-phos_BS"/>
</dbReference>
<dbReference type="InterPro" id="IPR000183">
    <property type="entry name" value="Orn/DAP/Arg_de-COase"/>
</dbReference>
<dbReference type="InterPro" id="IPR029066">
    <property type="entry name" value="PLP-binding_barrel"/>
</dbReference>
<dbReference type="NCBIfam" id="NF003763">
    <property type="entry name" value="PRK05354.1"/>
    <property type="match status" value="1"/>
</dbReference>
<dbReference type="PANTHER" id="PTHR43295">
    <property type="entry name" value="ARGININE DECARBOXYLASE"/>
    <property type="match status" value="1"/>
</dbReference>
<dbReference type="PANTHER" id="PTHR43295:SF1">
    <property type="entry name" value="ARGININE DECARBOXYLASE 1, CHLOROPLASTIC-RELATED"/>
    <property type="match status" value="1"/>
</dbReference>
<dbReference type="Pfam" id="PF02784">
    <property type="entry name" value="Orn_Arg_deC_N"/>
    <property type="match status" value="1"/>
</dbReference>
<dbReference type="PRINTS" id="PR01180">
    <property type="entry name" value="ARGDCRBXLASE"/>
</dbReference>
<dbReference type="PRINTS" id="PR01179">
    <property type="entry name" value="ODADCRBXLASE"/>
</dbReference>
<dbReference type="SUPFAM" id="SSF51419">
    <property type="entry name" value="PLP-binding barrel"/>
    <property type="match status" value="1"/>
</dbReference>
<dbReference type="PROSITE" id="PS00878">
    <property type="entry name" value="ODR_DC_2_1"/>
    <property type="match status" value="1"/>
</dbReference>
<name>SPE2_THECC</name>
<keyword id="KW-0210">Decarboxylase</keyword>
<keyword id="KW-0456">Lyase</keyword>
<keyword id="KW-0460">Magnesium</keyword>
<keyword id="KW-0661">Putrescine biosynthesis</keyword>
<keyword id="KW-0663">Pyridoxal phosphate</keyword>
<keyword id="KW-0745">Spermidine biosynthesis</keyword>
<sequence>YQGVYPVKSNQDRFVVEDIVKFGSSFRFGLEAGSKPELLLAMSCLCKGNPEALLVCNGFKDAEYISLALLARKLALKHVIVLEQEEEVDMVIDISQKLSVRPVIGVRAKLRTKHSGHFGSTSGEKGKFGLTTTQVLRVVKKLQDSGMLDCLQLLHFHIGSQIPSTALLSDGVGEAAQIYSELVRLGARMKVVDFGGGLGIDYNGSKSGDSDLSVPYGLQEYAHVVNAIRFVCDRKSVKHPVICSESGRAIVSHHSILIFEAICLTAPATHNEPINIPFIMEGLSEDACADYWNLRDTAMRTGDGAFWFYADQWKQRCVEQFKEGTLGIEQLASVDGLCEWVLKAIGASDPVHTYNINLSVFTSIPDLWGIDQLFPIVPIHKLDQRPGARGILSDLTCDSDGKINKF</sequence>
<comment type="catalytic activity">
    <reaction>
        <text>L-arginine + H(+) = agmatine + CO2</text>
        <dbReference type="Rhea" id="RHEA:17641"/>
        <dbReference type="ChEBI" id="CHEBI:15378"/>
        <dbReference type="ChEBI" id="CHEBI:16526"/>
        <dbReference type="ChEBI" id="CHEBI:32682"/>
        <dbReference type="ChEBI" id="CHEBI:58145"/>
        <dbReference type="EC" id="4.1.1.19"/>
    </reaction>
</comment>
<comment type="cofactor">
    <cofactor>
        <name>pyridoxal 5'-phosphate</name>
        <dbReference type="ChEBI" id="CHEBI:597326"/>
    </cofactor>
</comment>
<comment type="cofactor">
    <cofactor>
        <name>Mg(2+)</name>
        <dbReference type="ChEBI" id="CHEBI:18420"/>
    </cofactor>
</comment>
<comment type="pathway">
    <text>Amine and polyamine biosynthesis; agmatine biosynthesis; agmatine from L-arginine: step 1/1.</text>
</comment>
<comment type="similarity">
    <text evidence="2">Belongs to the Orn/Lys/Arg decarboxylase class-II family. SpeA subfamily.</text>
</comment>